<evidence type="ECO:0000255" key="1">
    <source>
        <dbReference type="HAMAP-Rule" id="MF_01571"/>
    </source>
</evidence>
<sequence>MADKITARNEDYSQWYIDLVRSAKLADYSDVRGCMVIRPNGYAIWEKMQAALDRMFKETGHVNAYFPLFIPESFIAKEAEHIEGFAPECAVVTHGGGEELAEKLYVRPTSETIIWSSYKKWIQSYRDLPILINQWANVVRWEMRTRLFLRTTEFLWQEGHTAHATPEESQEEVMRMINVYRTFAEEYMAMPVIMGRKTDSEKFAGAEETYCIEAMMQDGKALQAGTSHNLGQNFAKAFDCQFQTKDSRLDYVWATSWGVSTRLIGALIMAHSDDRGLVLPPKLASRQVVIIPILRGDKAAVLEQADAMAASLKAAGIPAFVDGSEQNSPGWKFAEYELQGIPVRIEVGPRDIEKGICIAARRDTLEKSELQLGETLPGAVQEILDAMQKDMYQKALLFREENTVEASSYEEFKAAVEKGFVIAHWDGTAETEEKIKEETKATIRVLPEEDGYIERYRMNEPGTCIYSGKPAAQKVVFAKAY</sequence>
<name>SYP_CHLL3</name>
<organism>
    <name type="scientific">Chlorobium luteolum (strain DSM 273 / BCRC 81028 / 2530)</name>
    <name type="common">Pelodictyon luteolum</name>
    <dbReference type="NCBI Taxonomy" id="319225"/>
    <lineage>
        <taxon>Bacteria</taxon>
        <taxon>Pseudomonadati</taxon>
        <taxon>Chlorobiota</taxon>
        <taxon>Chlorobiia</taxon>
        <taxon>Chlorobiales</taxon>
        <taxon>Chlorobiaceae</taxon>
        <taxon>Chlorobium/Pelodictyon group</taxon>
        <taxon>Pelodictyon</taxon>
    </lineage>
</organism>
<accession>Q3B2T0</accession>
<dbReference type="EC" id="6.1.1.15" evidence="1"/>
<dbReference type="EMBL" id="CP000096">
    <property type="protein sequence ID" value="ABB24351.1"/>
    <property type="molecule type" value="Genomic_DNA"/>
</dbReference>
<dbReference type="RefSeq" id="WP_011358223.1">
    <property type="nucleotide sequence ID" value="NC_007512.1"/>
</dbReference>
<dbReference type="SMR" id="Q3B2T0"/>
<dbReference type="STRING" id="319225.Plut_1492"/>
<dbReference type="KEGG" id="plt:Plut_1492"/>
<dbReference type="eggNOG" id="COG0442">
    <property type="taxonomic scope" value="Bacteria"/>
</dbReference>
<dbReference type="HOGENOM" id="CLU_001882_4_2_10"/>
<dbReference type="OrthoDB" id="9809052at2"/>
<dbReference type="Proteomes" id="UP000002709">
    <property type="component" value="Chromosome"/>
</dbReference>
<dbReference type="GO" id="GO:0017101">
    <property type="term" value="C:aminoacyl-tRNA synthetase multienzyme complex"/>
    <property type="evidence" value="ECO:0007669"/>
    <property type="project" value="TreeGrafter"/>
</dbReference>
<dbReference type="GO" id="GO:0005737">
    <property type="term" value="C:cytoplasm"/>
    <property type="evidence" value="ECO:0007669"/>
    <property type="project" value="UniProtKB-SubCell"/>
</dbReference>
<dbReference type="GO" id="GO:0005524">
    <property type="term" value="F:ATP binding"/>
    <property type="evidence" value="ECO:0007669"/>
    <property type="project" value="UniProtKB-UniRule"/>
</dbReference>
<dbReference type="GO" id="GO:0004827">
    <property type="term" value="F:proline-tRNA ligase activity"/>
    <property type="evidence" value="ECO:0007669"/>
    <property type="project" value="UniProtKB-UniRule"/>
</dbReference>
<dbReference type="GO" id="GO:0006433">
    <property type="term" value="P:prolyl-tRNA aminoacylation"/>
    <property type="evidence" value="ECO:0007669"/>
    <property type="project" value="UniProtKB-UniRule"/>
</dbReference>
<dbReference type="CDD" id="cd00778">
    <property type="entry name" value="ProRS_core_arch_euk"/>
    <property type="match status" value="1"/>
</dbReference>
<dbReference type="FunFam" id="3.30.930.10:FF:000023">
    <property type="entry name" value="Proline--tRNA ligase"/>
    <property type="match status" value="1"/>
</dbReference>
<dbReference type="Gene3D" id="3.40.50.800">
    <property type="entry name" value="Anticodon-binding domain"/>
    <property type="match status" value="1"/>
</dbReference>
<dbReference type="Gene3D" id="3.30.930.10">
    <property type="entry name" value="Bira Bifunctional Protein, Domain 2"/>
    <property type="match status" value="1"/>
</dbReference>
<dbReference type="Gene3D" id="3.30.110.30">
    <property type="entry name" value="C-terminal domain of ProRS"/>
    <property type="match status" value="1"/>
</dbReference>
<dbReference type="HAMAP" id="MF_01571">
    <property type="entry name" value="Pro_tRNA_synth_type3"/>
    <property type="match status" value="1"/>
</dbReference>
<dbReference type="InterPro" id="IPR002314">
    <property type="entry name" value="aa-tRNA-synt_IIb"/>
</dbReference>
<dbReference type="InterPro" id="IPR006195">
    <property type="entry name" value="aa-tRNA-synth_II"/>
</dbReference>
<dbReference type="InterPro" id="IPR045864">
    <property type="entry name" value="aa-tRNA-synth_II/BPL/LPL"/>
</dbReference>
<dbReference type="InterPro" id="IPR004154">
    <property type="entry name" value="Anticodon-bd"/>
</dbReference>
<dbReference type="InterPro" id="IPR036621">
    <property type="entry name" value="Anticodon-bd_dom_sf"/>
</dbReference>
<dbReference type="InterPro" id="IPR002316">
    <property type="entry name" value="Pro-tRNA-ligase_IIa"/>
</dbReference>
<dbReference type="InterPro" id="IPR004499">
    <property type="entry name" value="Pro-tRNA-ligase_IIa_arc-type"/>
</dbReference>
<dbReference type="InterPro" id="IPR016061">
    <property type="entry name" value="Pro-tRNA_ligase_II_C"/>
</dbReference>
<dbReference type="InterPro" id="IPR017449">
    <property type="entry name" value="Pro-tRNA_synth_II"/>
</dbReference>
<dbReference type="InterPro" id="IPR033721">
    <property type="entry name" value="ProRS_core_arch_euk"/>
</dbReference>
<dbReference type="NCBIfam" id="TIGR00408">
    <property type="entry name" value="proS_fam_I"/>
    <property type="match status" value="1"/>
</dbReference>
<dbReference type="PANTHER" id="PTHR43382:SF2">
    <property type="entry name" value="BIFUNCTIONAL GLUTAMATE_PROLINE--TRNA LIGASE"/>
    <property type="match status" value="1"/>
</dbReference>
<dbReference type="PANTHER" id="PTHR43382">
    <property type="entry name" value="PROLYL-TRNA SYNTHETASE"/>
    <property type="match status" value="1"/>
</dbReference>
<dbReference type="Pfam" id="PF03129">
    <property type="entry name" value="HGTP_anticodon"/>
    <property type="match status" value="1"/>
</dbReference>
<dbReference type="Pfam" id="PF09180">
    <property type="entry name" value="ProRS-C_1"/>
    <property type="match status" value="1"/>
</dbReference>
<dbReference type="Pfam" id="PF00587">
    <property type="entry name" value="tRNA-synt_2b"/>
    <property type="match status" value="1"/>
</dbReference>
<dbReference type="PRINTS" id="PR01046">
    <property type="entry name" value="TRNASYNTHPRO"/>
</dbReference>
<dbReference type="SMART" id="SM00946">
    <property type="entry name" value="ProRS-C_1"/>
    <property type="match status" value="1"/>
</dbReference>
<dbReference type="SUPFAM" id="SSF64586">
    <property type="entry name" value="C-terminal domain of ProRS"/>
    <property type="match status" value="1"/>
</dbReference>
<dbReference type="SUPFAM" id="SSF52954">
    <property type="entry name" value="Class II aaRS ABD-related"/>
    <property type="match status" value="1"/>
</dbReference>
<dbReference type="SUPFAM" id="SSF55681">
    <property type="entry name" value="Class II aaRS and biotin synthetases"/>
    <property type="match status" value="1"/>
</dbReference>
<dbReference type="PROSITE" id="PS50862">
    <property type="entry name" value="AA_TRNA_LIGASE_II"/>
    <property type="match status" value="1"/>
</dbReference>
<comment type="function">
    <text evidence="1">Catalyzes the attachment of proline to tRNA(Pro) in a two-step reaction: proline is first activated by ATP to form Pro-AMP and then transferred to the acceptor end of tRNA(Pro).</text>
</comment>
<comment type="catalytic activity">
    <reaction evidence="1">
        <text>tRNA(Pro) + L-proline + ATP = L-prolyl-tRNA(Pro) + AMP + diphosphate</text>
        <dbReference type="Rhea" id="RHEA:14305"/>
        <dbReference type="Rhea" id="RHEA-COMP:9700"/>
        <dbReference type="Rhea" id="RHEA-COMP:9702"/>
        <dbReference type="ChEBI" id="CHEBI:30616"/>
        <dbReference type="ChEBI" id="CHEBI:33019"/>
        <dbReference type="ChEBI" id="CHEBI:60039"/>
        <dbReference type="ChEBI" id="CHEBI:78442"/>
        <dbReference type="ChEBI" id="CHEBI:78532"/>
        <dbReference type="ChEBI" id="CHEBI:456215"/>
        <dbReference type="EC" id="6.1.1.15"/>
    </reaction>
</comment>
<comment type="subunit">
    <text evidence="1">Homodimer.</text>
</comment>
<comment type="subcellular location">
    <subcellularLocation>
        <location evidence="1">Cytoplasm</location>
    </subcellularLocation>
</comment>
<comment type="domain">
    <text evidence="1">Consists of three domains: the N-terminal catalytic domain, the anticodon-binding domain and the C-terminal extension.</text>
</comment>
<comment type="similarity">
    <text evidence="1">Belongs to the class-II aminoacyl-tRNA synthetase family. ProS type 3 subfamily.</text>
</comment>
<reference key="1">
    <citation type="submission" date="2005-08" db="EMBL/GenBank/DDBJ databases">
        <title>Complete sequence of Pelodictyon luteolum DSM 273.</title>
        <authorList>
            <consortium name="US DOE Joint Genome Institute"/>
            <person name="Copeland A."/>
            <person name="Lucas S."/>
            <person name="Lapidus A."/>
            <person name="Barry K."/>
            <person name="Detter J.C."/>
            <person name="Glavina T."/>
            <person name="Hammon N."/>
            <person name="Israni S."/>
            <person name="Pitluck S."/>
            <person name="Bryant D."/>
            <person name="Schmutz J."/>
            <person name="Larimer F."/>
            <person name="Land M."/>
            <person name="Kyrpides N."/>
            <person name="Ivanova N."/>
            <person name="Richardson P."/>
        </authorList>
    </citation>
    <scope>NUCLEOTIDE SEQUENCE [LARGE SCALE GENOMIC DNA]</scope>
    <source>
        <strain>DSM 273 / BCRC 81028 / 2530</strain>
    </source>
</reference>
<keyword id="KW-0030">Aminoacyl-tRNA synthetase</keyword>
<keyword id="KW-0067">ATP-binding</keyword>
<keyword id="KW-0963">Cytoplasm</keyword>
<keyword id="KW-0436">Ligase</keyword>
<keyword id="KW-0547">Nucleotide-binding</keyword>
<keyword id="KW-0648">Protein biosynthesis</keyword>
<keyword id="KW-1185">Reference proteome</keyword>
<protein>
    <recommendedName>
        <fullName evidence="1">Proline--tRNA ligase</fullName>
        <ecNumber evidence="1">6.1.1.15</ecNumber>
    </recommendedName>
    <alternativeName>
        <fullName evidence="1">Prolyl-tRNA synthetase</fullName>
        <shortName evidence="1">ProRS</shortName>
    </alternativeName>
</protein>
<gene>
    <name evidence="1" type="primary">proS</name>
    <name type="ordered locus">Plut_1492</name>
</gene>
<proteinExistence type="inferred from homology"/>
<feature type="chain" id="PRO_0000249146" description="Proline--tRNA ligase">
    <location>
        <begin position="1"/>
        <end position="481"/>
    </location>
</feature>